<name>QUEA_CAMJ8</name>
<dbReference type="EC" id="2.4.99.17" evidence="1"/>
<dbReference type="EMBL" id="CP000814">
    <property type="protein sequence ID" value="ABV52138.1"/>
    <property type="molecule type" value="Genomic_DNA"/>
</dbReference>
<dbReference type="RefSeq" id="WP_002877276.1">
    <property type="nucleotide sequence ID" value="NC_009839.1"/>
</dbReference>
<dbReference type="SMR" id="A8FL01"/>
<dbReference type="KEGG" id="cju:C8J_0539"/>
<dbReference type="HOGENOM" id="CLU_039110_1_0_7"/>
<dbReference type="UniPathway" id="UPA00392"/>
<dbReference type="GO" id="GO:0005737">
    <property type="term" value="C:cytoplasm"/>
    <property type="evidence" value="ECO:0007669"/>
    <property type="project" value="UniProtKB-SubCell"/>
</dbReference>
<dbReference type="GO" id="GO:0051075">
    <property type="term" value="F:S-adenosylmethionine:tRNA ribosyltransferase-isomerase activity"/>
    <property type="evidence" value="ECO:0007669"/>
    <property type="project" value="UniProtKB-EC"/>
</dbReference>
<dbReference type="GO" id="GO:0008616">
    <property type="term" value="P:queuosine biosynthetic process"/>
    <property type="evidence" value="ECO:0007669"/>
    <property type="project" value="UniProtKB-UniRule"/>
</dbReference>
<dbReference type="GO" id="GO:0002099">
    <property type="term" value="P:tRNA wobble guanine modification"/>
    <property type="evidence" value="ECO:0007669"/>
    <property type="project" value="TreeGrafter"/>
</dbReference>
<dbReference type="Gene3D" id="2.40.10.240">
    <property type="entry name" value="QueA-like"/>
    <property type="match status" value="1"/>
</dbReference>
<dbReference type="Gene3D" id="3.40.1780.10">
    <property type="entry name" value="QueA-like"/>
    <property type="match status" value="1"/>
</dbReference>
<dbReference type="HAMAP" id="MF_00113">
    <property type="entry name" value="QueA"/>
    <property type="match status" value="1"/>
</dbReference>
<dbReference type="InterPro" id="IPR003699">
    <property type="entry name" value="QueA"/>
</dbReference>
<dbReference type="InterPro" id="IPR042118">
    <property type="entry name" value="QueA_dom1"/>
</dbReference>
<dbReference type="InterPro" id="IPR042119">
    <property type="entry name" value="QueA_dom2"/>
</dbReference>
<dbReference type="InterPro" id="IPR036100">
    <property type="entry name" value="QueA_sf"/>
</dbReference>
<dbReference type="NCBIfam" id="NF001140">
    <property type="entry name" value="PRK00147.1"/>
    <property type="match status" value="1"/>
</dbReference>
<dbReference type="NCBIfam" id="TIGR00113">
    <property type="entry name" value="queA"/>
    <property type="match status" value="1"/>
</dbReference>
<dbReference type="PANTHER" id="PTHR30307">
    <property type="entry name" value="S-ADENOSYLMETHIONINE:TRNA RIBOSYLTRANSFERASE-ISOMERASE"/>
    <property type="match status" value="1"/>
</dbReference>
<dbReference type="PANTHER" id="PTHR30307:SF0">
    <property type="entry name" value="S-ADENOSYLMETHIONINE:TRNA RIBOSYLTRANSFERASE-ISOMERASE"/>
    <property type="match status" value="1"/>
</dbReference>
<dbReference type="Pfam" id="PF02547">
    <property type="entry name" value="Queuosine_synth"/>
    <property type="match status" value="1"/>
</dbReference>
<dbReference type="SUPFAM" id="SSF111337">
    <property type="entry name" value="QueA-like"/>
    <property type="match status" value="1"/>
</dbReference>
<reference key="1">
    <citation type="journal article" date="2007" name="J. Bacteriol.">
        <title>The complete genome sequence of Campylobacter jejuni strain 81116 (NCTC11828).</title>
        <authorList>
            <person name="Pearson B.M."/>
            <person name="Gaskin D.J.H."/>
            <person name="Segers R.P.A.M."/>
            <person name="Wells J.M."/>
            <person name="Nuijten P.J.M."/>
            <person name="van Vliet A.H.M."/>
        </authorList>
    </citation>
    <scope>NUCLEOTIDE SEQUENCE [LARGE SCALE GENOMIC DNA]</scope>
    <source>
        <strain>81116 / NCTC 11828</strain>
    </source>
</reference>
<organism>
    <name type="scientific">Campylobacter jejuni subsp. jejuni serotype O:6 (strain 81116 / NCTC 11828)</name>
    <dbReference type="NCBI Taxonomy" id="407148"/>
    <lineage>
        <taxon>Bacteria</taxon>
        <taxon>Pseudomonadati</taxon>
        <taxon>Campylobacterota</taxon>
        <taxon>Epsilonproteobacteria</taxon>
        <taxon>Campylobacterales</taxon>
        <taxon>Campylobacteraceae</taxon>
        <taxon>Campylobacter</taxon>
    </lineage>
</organism>
<gene>
    <name evidence="1" type="primary">queA</name>
    <name type="ordered locus">C8J_0539</name>
</gene>
<accession>A8FL01</accession>
<evidence type="ECO:0000255" key="1">
    <source>
        <dbReference type="HAMAP-Rule" id="MF_00113"/>
    </source>
</evidence>
<protein>
    <recommendedName>
        <fullName evidence="1">S-adenosylmethionine:tRNA ribosyltransferase-isomerase</fullName>
        <ecNumber evidence="1">2.4.99.17</ecNumber>
    </recommendedName>
    <alternativeName>
        <fullName evidence="1">Queuosine biosynthesis protein QueA</fullName>
    </alternativeName>
</protein>
<comment type="function">
    <text evidence="1">Transfers and isomerizes the ribose moiety from AdoMet to the 7-aminomethyl group of 7-deazaguanine (preQ1-tRNA) to give epoxyqueuosine (oQ-tRNA).</text>
</comment>
<comment type="catalytic activity">
    <reaction evidence="1">
        <text>7-aminomethyl-7-carbaguanosine(34) in tRNA + S-adenosyl-L-methionine = epoxyqueuosine(34) in tRNA + adenine + L-methionine + 2 H(+)</text>
        <dbReference type="Rhea" id="RHEA:32155"/>
        <dbReference type="Rhea" id="RHEA-COMP:10342"/>
        <dbReference type="Rhea" id="RHEA-COMP:18582"/>
        <dbReference type="ChEBI" id="CHEBI:15378"/>
        <dbReference type="ChEBI" id="CHEBI:16708"/>
        <dbReference type="ChEBI" id="CHEBI:57844"/>
        <dbReference type="ChEBI" id="CHEBI:59789"/>
        <dbReference type="ChEBI" id="CHEBI:82833"/>
        <dbReference type="ChEBI" id="CHEBI:194443"/>
        <dbReference type="EC" id="2.4.99.17"/>
    </reaction>
</comment>
<comment type="pathway">
    <text evidence="1">tRNA modification; tRNA-queuosine biosynthesis.</text>
</comment>
<comment type="subunit">
    <text evidence="1">Monomer.</text>
</comment>
<comment type="subcellular location">
    <subcellularLocation>
        <location evidence="1">Cytoplasm</location>
    </subcellularLocation>
</comment>
<comment type="similarity">
    <text evidence="1">Belongs to the QueA family.</text>
</comment>
<sequence length="342" mass="39597">MNKDLLLSSYDYTLANELIANYPTNPKEDARLLVFDRKNKEIFHTTFKNLQDFLPNCAIFFNDTKVIKARIYGNKVSGGKIELFLHQPFLNSHNPLFLAQIKGRVKKDEILYFKKDLKIRVVELLNDGLRKVQFFQNDKTLDTSNLYNLLDKIGHIPLPPYIKREDEKSDLKDYQSIFAKNLGAVAAPTASLHFSETMLENLRKKHEIYHLTLHVGAGTFKSVECENIQEHKMHSEFFNIPQQACEIIDSKQAILGVGTTVTRTIEYYARTKTKSGFCDLFLHPQNPPIRQNHLLTNFHLPKSTLIMLVSAFIGREQCLKLYELAIKEKYRFYSYGDAMLIL</sequence>
<keyword id="KW-0963">Cytoplasm</keyword>
<keyword id="KW-0671">Queuosine biosynthesis</keyword>
<keyword id="KW-0949">S-adenosyl-L-methionine</keyword>
<keyword id="KW-0808">Transferase</keyword>
<feature type="chain" id="PRO_1000094759" description="S-adenosylmethionine:tRNA ribosyltransferase-isomerase">
    <location>
        <begin position="1"/>
        <end position="342"/>
    </location>
</feature>
<proteinExistence type="inferred from homology"/>